<accession>C6E7L6</accession>
<feature type="chain" id="PRO_1000212456" description="Ribosomal RNA large subunit methyltransferase H">
    <location>
        <begin position="1"/>
        <end position="154"/>
    </location>
</feature>
<feature type="binding site" evidence="1">
    <location>
        <position position="70"/>
    </location>
    <ligand>
        <name>S-adenosyl-L-methionine</name>
        <dbReference type="ChEBI" id="CHEBI:59789"/>
    </ligand>
</feature>
<feature type="binding site" evidence="1">
    <location>
        <position position="102"/>
    </location>
    <ligand>
        <name>S-adenosyl-L-methionine</name>
        <dbReference type="ChEBI" id="CHEBI:59789"/>
    </ligand>
</feature>
<feature type="binding site" evidence="1">
    <location>
        <begin position="121"/>
        <end position="126"/>
    </location>
    <ligand>
        <name>S-adenosyl-L-methionine</name>
        <dbReference type="ChEBI" id="CHEBI:59789"/>
    </ligand>
</feature>
<comment type="function">
    <text evidence="1">Specifically methylates the pseudouridine at position 1915 (m3Psi1915) in 23S rRNA.</text>
</comment>
<comment type="catalytic activity">
    <reaction evidence="1">
        <text>pseudouridine(1915) in 23S rRNA + S-adenosyl-L-methionine = N(3)-methylpseudouridine(1915) in 23S rRNA + S-adenosyl-L-homocysteine + H(+)</text>
        <dbReference type="Rhea" id="RHEA:42752"/>
        <dbReference type="Rhea" id="RHEA-COMP:10221"/>
        <dbReference type="Rhea" id="RHEA-COMP:10222"/>
        <dbReference type="ChEBI" id="CHEBI:15378"/>
        <dbReference type="ChEBI" id="CHEBI:57856"/>
        <dbReference type="ChEBI" id="CHEBI:59789"/>
        <dbReference type="ChEBI" id="CHEBI:65314"/>
        <dbReference type="ChEBI" id="CHEBI:74486"/>
        <dbReference type="EC" id="2.1.1.177"/>
    </reaction>
</comment>
<comment type="subunit">
    <text evidence="1">Homodimer.</text>
</comment>
<comment type="subcellular location">
    <subcellularLocation>
        <location evidence="1">Cytoplasm</location>
    </subcellularLocation>
</comment>
<comment type="similarity">
    <text evidence="1">Belongs to the RNA methyltransferase RlmH family.</text>
</comment>
<organism>
    <name type="scientific">Geobacter sp. (strain M21)</name>
    <dbReference type="NCBI Taxonomy" id="443144"/>
    <lineage>
        <taxon>Bacteria</taxon>
        <taxon>Pseudomonadati</taxon>
        <taxon>Thermodesulfobacteriota</taxon>
        <taxon>Desulfuromonadia</taxon>
        <taxon>Geobacterales</taxon>
        <taxon>Geobacteraceae</taxon>
        <taxon>Geobacter</taxon>
    </lineage>
</organism>
<sequence>MRLKLLWVGKTQESWVRTGIEEYAGRIRRYAPLEILEAREEKGAQAAAMRERECERLAKLIPKGGRLVLLDERGEAMTSPELASFLSKNRDQGTQDLVFAIGGAYGFTDAFRSQAFKSISLSRMTLTHQMVRVFLLEQIYRGFTIINGEPYHHE</sequence>
<protein>
    <recommendedName>
        <fullName evidence="1">Ribosomal RNA large subunit methyltransferase H</fullName>
        <ecNumber evidence="1">2.1.1.177</ecNumber>
    </recommendedName>
    <alternativeName>
        <fullName evidence="1">23S rRNA (pseudouridine1915-N3)-methyltransferase</fullName>
    </alternativeName>
    <alternativeName>
        <fullName evidence="1">23S rRNA m3Psi1915 methyltransferase</fullName>
    </alternativeName>
    <alternativeName>
        <fullName evidence="1">rRNA (pseudouridine-N3-)-methyltransferase RlmH</fullName>
    </alternativeName>
</protein>
<gene>
    <name evidence="1" type="primary">rlmH</name>
    <name type="ordered locus">GM21_3859</name>
</gene>
<proteinExistence type="inferred from homology"/>
<evidence type="ECO:0000255" key="1">
    <source>
        <dbReference type="HAMAP-Rule" id="MF_00658"/>
    </source>
</evidence>
<reference key="1">
    <citation type="submission" date="2009-07" db="EMBL/GenBank/DDBJ databases">
        <title>Complete sequence of Geobacter sp. M21.</title>
        <authorList>
            <consortium name="US DOE Joint Genome Institute"/>
            <person name="Lucas S."/>
            <person name="Copeland A."/>
            <person name="Lapidus A."/>
            <person name="Glavina del Rio T."/>
            <person name="Dalin E."/>
            <person name="Tice H."/>
            <person name="Bruce D."/>
            <person name="Goodwin L."/>
            <person name="Pitluck S."/>
            <person name="Saunders E."/>
            <person name="Brettin T."/>
            <person name="Detter J.C."/>
            <person name="Han C."/>
            <person name="Larimer F."/>
            <person name="Land M."/>
            <person name="Hauser L."/>
            <person name="Kyrpides N."/>
            <person name="Ovchinnikova G."/>
            <person name="Lovley D."/>
        </authorList>
    </citation>
    <scope>NUCLEOTIDE SEQUENCE [LARGE SCALE GENOMIC DNA]</scope>
    <source>
        <strain>M21</strain>
    </source>
</reference>
<keyword id="KW-0963">Cytoplasm</keyword>
<keyword id="KW-0489">Methyltransferase</keyword>
<keyword id="KW-0698">rRNA processing</keyword>
<keyword id="KW-0949">S-adenosyl-L-methionine</keyword>
<keyword id="KW-0808">Transferase</keyword>
<name>RLMH_GEOSM</name>
<dbReference type="EC" id="2.1.1.177" evidence="1"/>
<dbReference type="EMBL" id="CP001661">
    <property type="protein sequence ID" value="ACT19876.1"/>
    <property type="molecule type" value="Genomic_DNA"/>
</dbReference>
<dbReference type="SMR" id="C6E7L6"/>
<dbReference type="STRING" id="443144.GM21_3859"/>
<dbReference type="KEGG" id="gem:GM21_3859"/>
<dbReference type="eggNOG" id="COG1576">
    <property type="taxonomic scope" value="Bacteria"/>
</dbReference>
<dbReference type="HOGENOM" id="CLU_100552_2_0_7"/>
<dbReference type="OrthoDB" id="9806643at2"/>
<dbReference type="GO" id="GO:0005737">
    <property type="term" value="C:cytoplasm"/>
    <property type="evidence" value="ECO:0007669"/>
    <property type="project" value="UniProtKB-SubCell"/>
</dbReference>
<dbReference type="GO" id="GO:0070038">
    <property type="term" value="F:rRNA (pseudouridine-N3-)-methyltransferase activity"/>
    <property type="evidence" value="ECO:0007669"/>
    <property type="project" value="UniProtKB-UniRule"/>
</dbReference>
<dbReference type="CDD" id="cd18081">
    <property type="entry name" value="RlmH-like"/>
    <property type="match status" value="1"/>
</dbReference>
<dbReference type="Gene3D" id="3.40.1280.10">
    <property type="match status" value="1"/>
</dbReference>
<dbReference type="HAMAP" id="MF_00658">
    <property type="entry name" value="23SrRNA_methyltr_H"/>
    <property type="match status" value="1"/>
</dbReference>
<dbReference type="InterPro" id="IPR029028">
    <property type="entry name" value="Alpha/beta_knot_MTases"/>
</dbReference>
<dbReference type="InterPro" id="IPR003742">
    <property type="entry name" value="RlmH-like"/>
</dbReference>
<dbReference type="InterPro" id="IPR029026">
    <property type="entry name" value="tRNA_m1G_MTases_N"/>
</dbReference>
<dbReference type="PANTHER" id="PTHR33603">
    <property type="entry name" value="METHYLTRANSFERASE"/>
    <property type="match status" value="1"/>
</dbReference>
<dbReference type="PANTHER" id="PTHR33603:SF1">
    <property type="entry name" value="RIBOSOMAL RNA LARGE SUBUNIT METHYLTRANSFERASE H"/>
    <property type="match status" value="1"/>
</dbReference>
<dbReference type="Pfam" id="PF02590">
    <property type="entry name" value="SPOUT_MTase"/>
    <property type="match status" value="1"/>
</dbReference>
<dbReference type="PIRSF" id="PIRSF004505">
    <property type="entry name" value="MT_bac"/>
    <property type="match status" value="1"/>
</dbReference>
<dbReference type="SUPFAM" id="SSF75217">
    <property type="entry name" value="alpha/beta knot"/>
    <property type="match status" value="1"/>
</dbReference>